<gene>
    <name evidence="1" type="primary">fabH</name>
    <name type="ordered locus">Tgr7_1911</name>
</gene>
<dbReference type="EC" id="2.3.1.180" evidence="1"/>
<dbReference type="EMBL" id="CP001339">
    <property type="protein sequence ID" value="ACL72992.1"/>
    <property type="molecule type" value="Genomic_DNA"/>
</dbReference>
<dbReference type="RefSeq" id="WP_012638471.1">
    <property type="nucleotide sequence ID" value="NC_011901.1"/>
</dbReference>
<dbReference type="SMR" id="B8GSX7"/>
<dbReference type="STRING" id="396588.Tgr7_1911"/>
<dbReference type="KEGG" id="tgr:Tgr7_1911"/>
<dbReference type="eggNOG" id="COG0332">
    <property type="taxonomic scope" value="Bacteria"/>
</dbReference>
<dbReference type="HOGENOM" id="CLU_039592_4_1_6"/>
<dbReference type="OrthoDB" id="9815506at2"/>
<dbReference type="UniPathway" id="UPA00094"/>
<dbReference type="Proteomes" id="UP000002383">
    <property type="component" value="Chromosome"/>
</dbReference>
<dbReference type="GO" id="GO:0005737">
    <property type="term" value="C:cytoplasm"/>
    <property type="evidence" value="ECO:0007669"/>
    <property type="project" value="UniProtKB-SubCell"/>
</dbReference>
<dbReference type="GO" id="GO:0004315">
    <property type="term" value="F:3-oxoacyl-[acyl-carrier-protein] synthase activity"/>
    <property type="evidence" value="ECO:0007669"/>
    <property type="project" value="InterPro"/>
</dbReference>
<dbReference type="GO" id="GO:0033818">
    <property type="term" value="F:beta-ketoacyl-acyl-carrier-protein synthase III activity"/>
    <property type="evidence" value="ECO:0007669"/>
    <property type="project" value="UniProtKB-UniRule"/>
</dbReference>
<dbReference type="GO" id="GO:0006633">
    <property type="term" value="P:fatty acid biosynthetic process"/>
    <property type="evidence" value="ECO:0007669"/>
    <property type="project" value="UniProtKB-UniRule"/>
</dbReference>
<dbReference type="CDD" id="cd00830">
    <property type="entry name" value="KAS_III"/>
    <property type="match status" value="1"/>
</dbReference>
<dbReference type="FunFam" id="3.40.47.10:FF:000004">
    <property type="entry name" value="3-oxoacyl-[acyl-carrier-protein] synthase 3"/>
    <property type="match status" value="1"/>
</dbReference>
<dbReference type="Gene3D" id="3.40.47.10">
    <property type="match status" value="1"/>
</dbReference>
<dbReference type="HAMAP" id="MF_01815">
    <property type="entry name" value="FabH"/>
    <property type="match status" value="1"/>
</dbReference>
<dbReference type="InterPro" id="IPR013747">
    <property type="entry name" value="ACP_syn_III_C"/>
</dbReference>
<dbReference type="InterPro" id="IPR013751">
    <property type="entry name" value="ACP_syn_III_N"/>
</dbReference>
<dbReference type="InterPro" id="IPR004655">
    <property type="entry name" value="FabH"/>
</dbReference>
<dbReference type="InterPro" id="IPR016039">
    <property type="entry name" value="Thiolase-like"/>
</dbReference>
<dbReference type="NCBIfam" id="TIGR00747">
    <property type="entry name" value="fabH"/>
    <property type="match status" value="1"/>
</dbReference>
<dbReference type="NCBIfam" id="NF006829">
    <property type="entry name" value="PRK09352.1"/>
    <property type="match status" value="1"/>
</dbReference>
<dbReference type="PANTHER" id="PTHR43091">
    <property type="entry name" value="3-OXOACYL-[ACYL-CARRIER-PROTEIN] SYNTHASE"/>
    <property type="match status" value="1"/>
</dbReference>
<dbReference type="PANTHER" id="PTHR43091:SF1">
    <property type="entry name" value="BETA-KETOACYL-[ACYL-CARRIER-PROTEIN] SYNTHASE III, CHLOROPLASTIC"/>
    <property type="match status" value="1"/>
</dbReference>
<dbReference type="Pfam" id="PF08545">
    <property type="entry name" value="ACP_syn_III"/>
    <property type="match status" value="1"/>
</dbReference>
<dbReference type="Pfam" id="PF08541">
    <property type="entry name" value="ACP_syn_III_C"/>
    <property type="match status" value="1"/>
</dbReference>
<dbReference type="SUPFAM" id="SSF53901">
    <property type="entry name" value="Thiolase-like"/>
    <property type="match status" value="1"/>
</dbReference>
<comment type="function">
    <text evidence="1">Catalyzes the condensation reaction of fatty acid synthesis by the addition to an acyl acceptor of two carbons from malonyl-ACP. Catalyzes the first condensation reaction which initiates fatty acid synthesis and may therefore play a role in governing the total rate of fatty acid production. Possesses both acetoacetyl-ACP synthase and acetyl transacylase activities. Its substrate specificity determines the biosynthesis of branched-chain and/or straight-chain of fatty acids.</text>
</comment>
<comment type="catalytic activity">
    <reaction evidence="1">
        <text>malonyl-[ACP] + acetyl-CoA + H(+) = 3-oxobutanoyl-[ACP] + CO2 + CoA</text>
        <dbReference type="Rhea" id="RHEA:12080"/>
        <dbReference type="Rhea" id="RHEA-COMP:9623"/>
        <dbReference type="Rhea" id="RHEA-COMP:9625"/>
        <dbReference type="ChEBI" id="CHEBI:15378"/>
        <dbReference type="ChEBI" id="CHEBI:16526"/>
        <dbReference type="ChEBI" id="CHEBI:57287"/>
        <dbReference type="ChEBI" id="CHEBI:57288"/>
        <dbReference type="ChEBI" id="CHEBI:78449"/>
        <dbReference type="ChEBI" id="CHEBI:78450"/>
        <dbReference type="EC" id="2.3.1.180"/>
    </reaction>
</comment>
<comment type="pathway">
    <text evidence="1">Lipid metabolism; fatty acid biosynthesis.</text>
</comment>
<comment type="subunit">
    <text evidence="1">Homodimer.</text>
</comment>
<comment type="subcellular location">
    <subcellularLocation>
        <location evidence="1">Cytoplasm</location>
    </subcellularLocation>
</comment>
<comment type="domain">
    <text evidence="1">The last Arg residue of the ACP-binding site is essential for the weak association between ACP/AcpP and FabH.</text>
</comment>
<comment type="similarity">
    <text evidence="1">Belongs to the thiolase-like superfamily. FabH family.</text>
</comment>
<protein>
    <recommendedName>
        <fullName evidence="1">Beta-ketoacyl-[acyl-carrier-protein] synthase III</fullName>
        <shortName evidence="1">Beta-ketoacyl-ACP synthase III</shortName>
        <shortName evidence="1">KAS III</shortName>
        <ecNumber evidence="1">2.3.1.180</ecNumber>
    </recommendedName>
    <alternativeName>
        <fullName evidence="1">3-oxoacyl-[acyl-carrier-protein] synthase 3</fullName>
    </alternativeName>
    <alternativeName>
        <fullName evidence="1">3-oxoacyl-[acyl-carrier-protein] synthase III</fullName>
    </alternativeName>
</protein>
<sequence length="322" mass="35033">MTYARITGTGGCLPEKILTNHDLEKMVETTDEWIQERTGIKKRHVAGPEETTCDLAERAARRAMEMAGRSSADIDLIIVATTTPDRVFPSTACLLQKRLEIHGCAAFDVQAVCTGFVYALGVADRFIRTGGAKCALVVGAETLSRIVDWTDRTTCVLFGDGAGAVVLEASEEQGILSTHLHADGRFDNLLHVPKGISTAYSEVLAGEAYIEMKGNEVFKVAVNTLGRIVDETLEYNDIDQAEIDWLIPHQANIRIIQATARKLKMPMDRVVVTVDEHGNTSAASIPLALDVAVRDGRVRPGDLLMMEAFGGGFTWGSALLRF</sequence>
<proteinExistence type="inferred from homology"/>
<keyword id="KW-0012">Acyltransferase</keyword>
<keyword id="KW-0963">Cytoplasm</keyword>
<keyword id="KW-0275">Fatty acid biosynthesis</keyword>
<keyword id="KW-0276">Fatty acid metabolism</keyword>
<keyword id="KW-0444">Lipid biosynthesis</keyword>
<keyword id="KW-0443">Lipid metabolism</keyword>
<keyword id="KW-0511">Multifunctional enzyme</keyword>
<keyword id="KW-1185">Reference proteome</keyword>
<keyword id="KW-0808">Transferase</keyword>
<organism>
    <name type="scientific">Thioalkalivibrio sulfidiphilus (strain HL-EbGR7)</name>
    <dbReference type="NCBI Taxonomy" id="396588"/>
    <lineage>
        <taxon>Bacteria</taxon>
        <taxon>Pseudomonadati</taxon>
        <taxon>Pseudomonadota</taxon>
        <taxon>Gammaproteobacteria</taxon>
        <taxon>Chromatiales</taxon>
        <taxon>Ectothiorhodospiraceae</taxon>
        <taxon>Thioalkalivibrio</taxon>
    </lineage>
</organism>
<accession>B8GSX7</accession>
<name>FABH_THISH</name>
<evidence type="ECO:0000255" key="1">
    <source>
        <dbReference type="HAMAP-Rule" id="MF_01815"/>
    </source>
</evidence>
<feature type="chain" id="PRO_1000187909" description="Beta-ketoacyl-[acyl-carrier-protein] synthase III">
    <location>
        <begin position="1"/>
        <end position="322"/>
    </location>
</feature>
<feature type="region of interest" description="ACP-binding" evidence="1">
    <location>
        <begin position="250"/>
        <end position="254"/>
    </location>
</feature>
<feature type="active site" evidence="1">
    <location>
        <position position="113"/>
    </location>
</feature>
<feature type="active site" evidence="1">
    <location>
        <position position="249"/>
    </location>
</feature>
<feature type="active site" evidence="1">
    <location>
        <position position="279"/>
    </location>
</feature>
<reference key="1">
    <citation type="journal article" date="2011" name="Stand. Genomic Sci.">
        <title>Complete genome sequence of 'Thioalkalivibrio sulfidophilus' HL-EbGr7.</title>
        <authorList>
            <person name="Muyzer G."/>
            <person name="Sorokin D.Y."/>
            <person name="Mavromatis K."/>
            <person name="Lapidus A."/>
            <person name="Clum A."/>
            <person name="Ivanova N."/>
            <person name="Pati A."/>
            <person name="d'Haeseleer P."/>
            <person name="Woyke T."/>
            <person name="Kyrpides N.C."/>
        </authorList>
    </citation>
    <scope>NUCLEOTIDE SEQUENCE [LARGE SCALE GENOMIC DNA]</scope>
    <source>
        <strain>HL-EbGR7</strain>
    </source>
</reference>